<proteinExistence type="inferred from homology"/>
<protein>
    <recommendedName>
        <fullName evidence="1">Bifunctional protein FolD</fullName>
    </recommendedName>
    <domain>
        <recommendedName>
            <fullName evidence="1">Methylenetetrahydrofolate dehydrogenase</fullName>
            <ecNumber evidence="1">1.5.1.5</ecNumber>
        </recommendedName>
    </domain>
    <domain>
        <recommendedName>
            <fullName evidence="1">Methenyltetrahydrofolate cyclohydrolase</fullName>
            <ecNumber evidence="1">3.5.4.9</ecNumber>
        </recommendedName>
    </domain>
</protein>
<sequence>MAVVIDGKAKAASVTEAVRKSAEALEAEKGVKPGLAVVIVGNDPASHAYVNSKSKMAKQCGFNSIQHTLPEETTQAALLKLVGELNTDASIHGILVQLPLPKHFNSDEIIQSILPEKDVDGLSVLNAGKLATGDLATGLISCTPAGAMLLVRGIHGDDLSGLNAVVIGRSNLFGKPMGQLLLNANATVTMAHSRTKDLVTVCKTADILVAAVGRAAMVKGDWVKPGATVIDVGINRIAAPEKGEGKSKLVGDVAFDEASAVAAAITPVPGGVGPMTIAMLMANTVIAAHRALGKTAPKF</sequence>
<comment type="function">
    <text evidence="1">Catalyzes the oxidation of 5,10-methylenetetrahydrofolate to 5,10-methenyltetrahydrofolate and then the hydrolysis of 5,10-methenyltetrahydrofolate to 10-formyltetrahydrofolate.</text>
</comment>
<comment type="catalytic activity">
    <reaction evidence="1">
        <text>(6R)-5,10-methylene-5,6,7,8-tetrahydrofolate + NADP(+) = (6R)-5,10-methenyltetrahydrofolate + NADPH</text>
        <dbReference type="Rhea" id="RHEA:22812"/>
        <dbReference type="ChEBI" id="CHEBI:15636"/>
        <dbReference type="ChEBI" id="CHEBI:57455"/>
        <dbReference type="ChEBI" id="CHEBI:57783"/>
        <dbReference type="ChEBI" id="CHEBI:58349"/>
        <dbReference type="EC" id="1.5.1.5"/>
    </reaction>
</comment>
<comment type="catalytic activity">
    <reaction evidence="1">
        <text>(6R)-5,10-methenyltetrahydrofolate + H2O = (6R)-10-formyltetrahydrofolate + H(+)</text>
        <dbReference type="Rhea" id="RHEA:23700"/>
        <dbReference type="ChEBI" id="CHEBI:15377"/>
        <dbReference type="ChEBI" id="CHEBI:15378"/>
        <dbReference type="ChEBI" id="CHEBI:57455"/>
        <dbReference type="ChEBI" id="CHEBI:195366"/>
        <dbReference type="EC" id="3.5.4.9"/>
    </reaction>
</comment>
<comment type="pathway">
    <text evidence="1">One-carbon metabolism; tetrahydrofolate interconversion.</text>
</comment>
<comment type="subunit">
    <text evidence="1">Homodimer.</text>
</comment>
<comment type="similarity">
    <text evidence="1">Belongs to the tetrahydrofolate dehydrogenase/cyclohydrolase family.</text>
</comment>
<reference key="1">
    <citation type="journal article" date="2001" name="Science">
        <title>The genome of the natural genetic engineer Agrobacterium tumefaciens C58.</title>
        <authorList>
            <person name="Wood D.W."/>
            <person name="Setubal J.C."/>
            <person name="Kaul R."/>
            <person name="Monks D.E."/>
            <person name="Kitajima J.P."/>
            <person name="Okura V.K."/>
            <person name="Zhou Y."/>
            <person name="Chen L."/>
            <person name="Wood G.E."/>
            <person name="Almeida N.F. Jr."/>
            <person name="Woo L."/>
            <person name="Chen Y."/>
            <person name="Paulsen I.T."/>
            <person name="Eisen J.A."/>
            <person name="Karp P.D."/>
            <person name="Bovee D. Sr."/>
            <person name="Chapman P."/>
            <person name="Clendenning J."/>
            <person name="Deatherage G."/>
            <person name="Gillet W."/>
            <person name="Grant C."/>
            <person name="Kutyavin T."/>
            <person name="Levy R."/>
            <person name="Li M.-J."/>
            <person name="McClelland E."/>
            <person name="Palmieri A."/>
            <person name="Raymond C."/>
            <person name="Rouse G."/>
            <person name="Saenphimmachak C."/>
            <person name="Wu Z."/>
            <person name="Romero P."/>
            <person name="Gordon D."/>
            <person name="Zhang S."/>
            <person name="Yoo H."/>
            <person name="Tao Y."/>
            <person name="Biddle P."/>
            <person name="Jung M."/>
            <person name="Krespan W."/>
            <person name="Perry M."/>
            <person name="Gordon-Kamm B."/>
            <person name="Liao L."/>
            <person name="Kim S."/>
            <person name="Hendrick C."/>
            <person name="Zhao Z.-Y."/>
            <person name="Dolan M."/>
            <person name="Chumley F."/>
            <person name="Tingey S.V."/>
            <person name="Tomb J.-F."/>
            <person name="Gordon M.P."/>
            <person name="Olson M.V."/>
            <person name="Nester E.W."/>
        </authorList>
    </citation>
    <scope>NUCLEOTIDE SEQUENCE [LARGE SCALE GENOMIC DNA]</scope>
    <source>
        <strain>C58 / ATCC 33970</strain>
    </source>
</reference>
<reference key="2">
    <citation type="journal article" date="2001" name="Science">
        <title>Genome sequence of the plant pathogen and biotechnology agent Agrobacterium tumefaciens C58.</title>
        <authorList>
            <person name="Goodner B."/>
            <person name="Hinkle G."/>
            <person name="Gattung S."/>
            <person name="Miller N."/>
            <person name="Blanchard M."/>
            <person name="Qurollo B."/>
            <person name="Goldman B.S."/>
            <person name="Cao Y."/>
            <person name="Askenazi M."/>
            <person name="Halling C."/>
            <person name="Mullin L."/>
            <person name="Houmiel K."/>
            <person name="Gordon J."/>
            <person name="Vaudin M."/>
            <person name="Iartchouk O."/>
            <person name="Epp A."/>
            <person name="Liu F."/>
            <person name="Wollam C."/>
            <person name="Allinger M."/>
            <person name="Doughty D."/>
            <person name="Scott C."/>
            <person name="Lappas C."/>
            <person name="Markelz B."/>
            <person name="Flanagan C."/>
            <person name="Crowell C."/>
            <person name="Gurson J."/>
            <person name="Lomo C."/>
            <person name="Sear C."/>
            <person name="Strub G."/>
            <person name="Cielo C."/>
            <person name="Slater S."/>
        </authorList>
    </citation>
    <scope>NUCLEOTIDE SEQUENCE [LARGE SCALE GENOMIC DNA]</scope>
    <source>
        <strain>C58 / ATCC 33970</strain>
    </source>
</reference>
<keyword id="KW-0028">Amino-acid biosynthesis</keyword>
<keyword id="KW-0368">Histidine biosynthesis</keyword>
<keyword id="KW-0378">Hydrolase</keyword>
<keyword id="KW-0486">Methionine biosynthesis</keyword>
<keyword id="KW-0511">Multifunctional enzyme</keyword>
<keyword id="KW-0521">NADP</keyword>
<keyword id="KW-0554">One-carbon metabolism</keyword>
<keyword id="KW-0560">Oxidoreductase</keyword>
<keyword id="KW-0658">Purine biosynthesis</keyword>
<keyword id="KW-1185">Reference proteome</keyword>
<evidence type="ECO:0000255" key="1">
    <source>
        <dbReference type="HAMAP-Rule" id="MF_01576"/>
    </source>
</evidence>
<gene>
    <name evidence="1" type="primary">folD</name>
    <name type="ordered locus">Atu0589</name>
    <name type="ORF">AGR_C_1042</name>
</gene>
<feature type="chain" id="PRO_0000268254" description="Bifunctional protein FolD">
    <location>
        <begin position="1"/>
        <end position="299"/>
    </location>
</feature>
<feature type="binding site" evidence="1">
    <location>
        <begin position="168"/>
        <end position="170"/>
    </location>
    <ligand>
        <name>NADP(+)</name>
        <dbReference type="ChEBI" id="CHEBI:58349"/>
    </ligand>
</feature>
<feature type="binding site" evidence="1">
    <location>
        <position position="193"/>
    </location>
    <ligand>
        <name>NADP(+)</name>
        <dbReference type="ChEBI" id="CHEBI:58349"/>
    </ligand>
</feature>
<feature type="binding site" evidence="1">
    <location>
        <position position="234"/>
    </location>
    <ligand>
        <name>NADP(+)</name>
        <dbReference type="ChEBI" id="CHEBI:58349"/>
    </ligand>
</feature>
<organism>
    <name type="scientific">Agrobacterium fabrum (strain C58 / ATCC 33970)</name>
    <name type="common">Agrobacterium tumefaciens (strain C58)</name>
    <dbReference type="NCBI Taxonomy" id="176299"/>
    <lineage>
        <taxon>Bacteria</taxon>
        <taxon>Pseudomonadati</taxon>
        <taxon>Pseudomonadota</taxon>
        <taxon>Alphaproteobacteria</taxon>
        <taxon>Hyphomicrobiales</taxon>
        <taxon>Rhizobiaceae</taxon>
        <taxon>Rhizobium/Agrobacterium group</taxon>
        <taxon>Agrobacterium</taxon>
        <taxon>Agrobacterium tumefaciens complex</taxon>
    </lineage>
</organism>
<name>FOLD_AGRFC</name>
<accession>Q8UHU0</accession>
<accession>Q7D158</accession>
<dbReference type="EC" id="1.5.1.5" evidence="1"/>
<dbReference type="EC" id="3.5.4.9" evidence="1"/>
<dbReference type="EMBL" id="AE007869">
    <property type="protein sequence ID" value="AAK86400.2"/>
    <property type="molecule type" value="Genomic_DNA"/>
</dbReference>
<dbReference type="PIR" id="AH2648">
    <property type="entry name" value="AH2648"/>
</dbReference>
<dbReference type="PIR" id="G97430">
    <property type="entry name" value="G97430"/>
</dbReference>
<dbReference type="RefSeq" id="NP_353615.2">
    <property type="nucleotide sequence ID" value="NC_003062.2"/>
</dbReference>
<dbReference type="RefSeq" id="WP_010970994.1">
    <property type="nucleotide sequence ID" value="NC_003062.2"/>
</dbReference>
<dbReference type="SMR" id="Q8UHU0"/>
<dbReference type="STRING" id="176299.Atu0589"/>
<dbReference type="EnsemblBacteria" id="AAK86400">
    <property type="protein sequence ID" value="AAK86400"/>
    <property type="gene ID" value="Atu0589"/>
</dbReference>
<dbReference type="GeneID" id="1132627"/>
<dbReference type="KEGG" id="atu:Atu0589"/>
<dbReference type="PATRIC" id="fig|176299.10.peg.584"/>
<dbReference type="eggNOG" id="COG0190">
    <property type="taxonomic scope" value="Bacteria"/>
</dbReference>
<dbReference type="HOGENOM" id="CLU_034045_1_2_5"/>
<dbReference type="OrthoDB" id="9803580at2"/>
<dbReference type="PhylomeDB" id="Q8UHU0"/>
<dbReference type="BioCyc" id="AGRO:ATU0589-MONOMER"/>
<dbReference type="UniPathway" id="UPA00193"/>
<dbReference type="Proteomes" id="UP000000813">
    <property type="component" value="Chromosome circular"/>
</dbReference>
<dbReference type="GO" id="GO:0005829">
    <property type="term" value="C:cytosol"/>
    <property type="evidence" value="ECO:0007669"/>
    <property type="project" value="TreeGrafter"/>
</dbReference>
<dbReference type="GO" id="GO:0004477">
    <property type="term" value="F:methenyltetrahydrofolate cyclohydrolase activity"/>
    <property type="evidence" value="ECO:0007669"/>
    <property type="project" value="UniProtKB-UniRule"/>
</dbReference>
<dbReference type="GO" id="GO:0004488">
    <property type="term" value="F:methylenetetrahydrofolate dehydrogenase (NADP+) activity"/>
    <property type="evidence" value="ECO:0007669"/>
    <property type="project" value="UniProtKB-UniRule"/>
</dbReference>
<dbReference type="GO" id="GO:0000105">
    <property type="term" value="P:L-histidine biosynthetic process"/>
    <property type="evidence" value="ECO:0007669"/>
    <property type="project" value="UniProtKB-KW"/>
</dbReference>
<dbReference type="GO" id="GO:0009086">
    <property type="term" value="P:methionine biosynthetic process"/>
    <property type="evidence" value="ECO:0007669"/>
    <property type="project" value="UniProtKB-KW"/>
</dbReference>
<dbReference type="GO" id="GO:0006164">
    <property type="term" value="P:purine nucleotide biosynthetic process"/>
    <property type="evidence" value="ECO:0007669"/>
    <property type="project" value="UniProtKB-KW"/>
</dbReference>
<dbReference type="GO" id="GO:0035999">
    <property type="term" value="P:tetrahydrofolate interconversion"/>
    <property type="evidence" value="ECO:0007669"/>
    <property type="project" value="UniProtKB-UniRule"/>
</dbReference>
<dbReference type="CDD" id="cd01080">
    <property type="entry name" value="NAD_bind_m-THF_DH_Cyclohyd"/>
    <property type="match status" value="1"/>
</dbReference>
<dbReference type="FunFam" id="3.40.50.720:FF:000006">
    <property type="entry name" value="Bifunctional protein FolD"/>
    <property type="match status" value="1"/>
</dbReference>
<dbReference type="FunFam" id="3.40.50.10860:FF:000005">
    <property type="entry name" value="C-1-tetrahydrofolate synthase, cytoplasmic, putative"/>
    <property type="match status" value="1"/>
</dbReference>
<dbReference type="Gene3D" id="3.40.50.10860">
    <property type="entry name" value="Leucine Dehydrogenase, chain A, domain 1"/>
    <property type="match status" value="1"/>
</dbReference>
<dbReference type="Gene3D" id="3.40.50.720">
    <property type="entry name" value="NAD(P)-binding Rossmann-like Domain"/>
    <property type="match status" value="1"/>
</dbReference>
<dbReference type="HAMAP" id="MF_01576">
    <property type="entry name" value="THF_DHG_CYH"/>
    <property type="match status" value="1"/>
</dbReference>
<dbReference type="InterPro" id="IPR046346">
    <property type="entry name" value="Aminoacid_DH-like_N_sf"/>
</dbReference>
<dbReference type="InterPro" id="IPR036291">
    <property type="entry name" value="NAD(P)-bd_dom_sf"/>
</dbReference>
<dbReference type="InterPro" id="IPR000672">
    <property type="entry name" value="THF_DH/CycHdrlase"/>
</dbReference>
<dbReference type="InterPro" id="IPR020630">
    <property type="entry name" value="THF_DH/CycHdrlase_cat_dom"/>
</dbReference>
<dbReference type="InterPro" id="IPR020867">
    <property type="entry name" value="THF_DH/CycHdrlase_CS"/>
</dbReference>
<dbReference type="InterPro" id="IPR020631">
    <property type="entry name" value="THF_DH/CycHdrlase_NAD-bd_dom"/>
</dbReference>
<dbReference type="NCBIfam" id="NF010785">
    <property type="entry name" value="PRK14188.1"/>
    <property type="match status" value="1"/>
</dbReference>
<dbReference type="PANTHER" id="PTHR48099:SF5">
    <property type="entry name" value="C-1-TETRAHYDROFOLATE SYNTHASE, CYTOPLASMIC"/>
    <property type="match status" value="1"/>
</dbReference>
<dbReference type="PANTHER" id="PTHR48099">
    <property type="entry name" value="C-1-TETRAHYDROFOLATE SYNTHASE, CYTOPLASMIC-RELATED"/>
    <property type="match status" value="1"/>
</dbReference>
<dbReference type="Pfam" id="PF00763">
    <property type="entry name" value="THF_DHG_CYH"/>
    <property type="match status" value="1"/>
</dbReference>
<dbReference type="Pfam" id="PF02882">
    <property type="entry name" value="THF_DHG_CYH_C"/>
    <property type="match status" value="1"/>
</dbReference>
<dbReference type="PRINTS" id="PR00085">
    <property type="entry name" value="THFDHDRGNASE"/>
</dbReference>
<dbReference type="SUPFAM" id="SSF53223">
    <property type="entry name" value="Aminoacid dehydrogenase-like, N-terminal domain"/>
    <property type="match status" value="1"/>
</dbReference>
<dbReference type="SUPFAM" id="SSF51735">
    <property type="entry name" value="NAD(P)-binding Rossmann-fold domains"/>
    <property type="match status" value="1"/>
</dbReference>
<dbReference type="PROSITE" id="PS00767">
    <property type="entry name" value="THF_DHG_CYH_2"/>
    <property type="match status" value="1"/>
</dbReference>